<gene>
    <name evidence="9" type="primary">rnf-145</name>
    <name evidence="9" type="ORF">Y119C1B.5</name>
</gene>
<comment type="function">
    <text evidence="1 5">E3 ubiquitin ligase that catalyzes the direct transfer of ubiquitin from E2 ubiquitin-conjugating enzyme to a specific substrate (By similarity). Acting downstream of probable Golgi transport protein eas-1, involved in inhibition of activation of transcription factor sbp-1, thereby playing a role in regulating AMsh glial cell size (PubMed:33370778).</text>
</comment>
<comment type="catalytic activity">
    <reaction evidence="1">
        <text>S-ubiquitinyl-[E2 ubiquitin-conjugating enzyme]-L-cysteine + [acceptor protein]-L-lysine = [E2 ubiquitin-conjugating enzyme]-L-cysteine + N(6)-ubiquitinyl-[acceptor protein]-L-lysine.</text>
        <dbReference type="EC" id="2.3.2.27"/>
    </reaction>
</comment>
<comment type="subcellular location">
    <subcellularLocation>
        <location evidence="2">Membrane</location>
        <topology evidence="2">Multi-pass membrane protein</topology>
    </subcellularLocation>
    <subcellularLocation>
        <location evidence="5">Golgi apparatus</location>
        <location evidence="5">cis-Golgi network</location>
    </subcellularLocation>
    <subcellularLocation>
        <location evidence="5">Golgi apparatus</location>
        <location evidence="5">trans-Golgi network</location>
    </subcellularLocation>
    <text evidence="5">Localized to cis-Golgi during larval L1 stage, but localized to trans-Golgi in early adulthood.</text>
</comment>
<accession>Q95Y82</accession>
<protein>
    <recommendedName>
        <fullName evidence="6">RING finger protein 145 homolog</fullName>
        <ecNumber evidence="1">2.3.2.27</ecNumber>
    </recommendedName>
</protein>
<organism evidence="8">
    <name type="scientific">Caenorhabditis elegans</name>
    <dbReference type="NCBI Taxonomy" id="6239"/>
    <lineage>
        <taxon>Eukaryota</taxon>
        <taxon>Metazoa</taxon>
        <taxon>Ecdysozoa</taxon>
        <taxon>Nematoda</taxon>
        <taxon>Chromadorea</taxon>
        <taxon>Rhabditida</taxon>
        <taxon>Rhabditina</taxon>
        <taxon>Rhabditomorpha</taxon>
        <taxon>Rhabditoidea</taxon>
        <taxon>Rhabditidae</taxon>
        <taxon>Peloderinae</taxon>
        <taxon>Caenorhabditis</taxon>
    </lineage>
</organism>
<sequence>MEGVMENVGGLMQNIRRRHMSITEMTEESVRLGVAQMDTGFKKIKEMSIMVLETGLRLPGLLFIELLWRYQGFSFEDISDDMMKQTPLSYFDIPTMLDFVHRRNFDHHAAIILSYFVIFISLMFLTLPLSRLIRMYSHFLSVFLFGVAYKLSAIYVDLEMKTGEEELKLDGLIKLERHGFHFLAQMLLVVLQSMLLEVDGEPWRVALPVFALPIVARMCGCPMDKLKNAHNYACTGTMIFIATYMLYRAPSLIKSTKTALRQIKAVFMVHGLADGVAVLWRKLRILELLTFTWITMFLMVLYVELIDKGRTWSEVGRILLTGVAETTNTPITLAALAVSVSYVCKWIADLTKLITGGTRSHGHVLAHSGYTEAVSVVILCIQTGFLGMQVEQKTILLALVLYIVISALLQSLFEIIEVVLLNLPSSPTASRARHARCICIALLLVVIPFFTTKTMLALLPIDIYTAIIIANSATVTARAIGVILKYIVLIVETKSEEPWEGIDDLTYYIDCANKGIELLAAKVVMVFGCMQVVKVGFSFATFAILLFHVIVNIYKRLEHTVSFIKNRNAAVKNINRLSKADVVQLREREDVCAICFIEMKEEARITPCKHYFHGPCLRKWLAVKMVCPLCYTYMKEDDFDSKSSSSGTLNEVQQNEEGAAVEENPENPEEQPEAPNAERAPGDMFDWDDLFGFRAERETRNRNEQRIHGARDMWPLLVDNDAYESDSDAGSEELVIEEENNN</sequence>
<name>RN145_CAEEL</name>
<keyword id="KW-0333">Golgi apparatus</keyword>
<keyword id="KW-0472">Membrane</keyword>
<keyword id="KW-0479">Metal-binding</keyword>
<keyword id="KW-1185">Reference proteome</keyword>
<keyword id="KW-0808">Transferase</keyword>
<keyword id="KW-0812">Transmembrane</keyword>
<keyword id="KW-1133">Transmembrane helix</keyword>
<keyword id="KW-0862">Zinc</keyword>
<keyword id="KW-0863">Zinc-finger</keyword>
<feature type="chain" id="PRO_0000456354" description="RING finger protein 145 homolog">
    <location>
        <begin position="1"/>
        <end position="742"/>
    </location>
</feature>
<feature type="transmembrane region" description="Helical" evidence="2">
    <location>
        <begin position="109"/>
        <end position="129"/>
    </location>
</feature>
<feature type="transmembrane region" description="Helical" evidence="2">
    <location>
        <begin position="138"/>
        <end position="158"/>
    </location>
</feature>
<feature type="transmembrane region" description="Helical" evidence="2">
    <location>
        <begin position="178"/>
        <end position="198"/>
    </location>
</feature>
<feature type="transmembrane region" description="Helical" evidence="2">
    <location>
        <begin position="233"/>
        <end position="253"/>
    </location>
</feature>
<feature type="transmembrane region" description="Helical" evidence="2">
    <location>
        <begin position="285"/>
        <end position="305"/>
    </location>
</feature>
<feature type="transmembrane region" description="Helical" evidence="2">
    <location>
        <begin position="318"/>
        <end position="338"/>
    </location>
</feature>
<feature type="transmembrane region" description="Helical" evidence="2">
    <location>
        <begin position="368"/>
        <end position="388"/>
    </location>
</feature>
<feature type="transmembrane region" description="Helical" evidence="2">
    <location>
        <begin position="395"/>
        <end position="415"/>
    </location>
</feature>
<feature type="transmembrane region" description="Helical" evidence="2">
    <location>
        <begin position="438"/>
        <end position="458"/>
    </location>
</feature>
<feature type="transmembrane region" description="Helical" evidence="2">
    <location>
        <begin position="463"/>
        <end position="483"/>
    </location>
</feature>
<feature type="transmembrane region" description="Helical" evidence="2">
    <location>
        <begin position="533"/>
        <end position="553"/>
    </location>
</feature>
<feature type="zinc finger region" description="RING-type; atypical" evidence="3">
    <location>
        <begin position="592"/>
        <end position="630"/>
    </location>
</feature>
<feature type="region of interest" description="Disordered" evidence="4">
    <location>
        <begin position="642"/>
        <end position="684"/>
    </location>
</feature>
<feature type="region of interest" description="Disordered" evidence="4">
    <location>
        <begin position="722"/>
        <end position="742"/>
    </location>
</feature>
<feature type="compositionally biased region" description="Acidic residues" evidence="4">
    <location>
        <begin position="659"/>
        <end position="672"/>
    </location>
</feature>
<dbReference type="EC" id="2.3.2.27" evidence="1"/>
<dbReference type="EMBL" id="BX284601">
    <property type="protein sequence ID" value="CCD68302.2"/>
    <property type="molecule type" value="Genomic_DNA"/>
</dbReference>
<dbReference type="RefSeq" id="NP_491382.2">
    <property type="nucleotide sequence ID" value="NM_058981.7"/>
</dbReference>
<dbReference type="DIP" id="DIP-25789N"/>
<dbReference type="FunCoup" id="Q95Y82">
    <property type="interactions" value="2870"/>
</dbReference>
<dbReference type="STRING" id="6239.Y119C1B.5.1"/>
<dbReference type="PaxDb" id="6239-Y119C1B.5"/>
<dbReference type="PeptideAtlas" id="Q95Y82"/>
<dbReference type="EnsemblMetazoa" id="Y119C1B.5.1">
    <property type="protein sequence ID" value="Y119C1B.5.1"/>
    <property type="gene ID" value="WBGene00022471"/>
</dbReference>
<dbReference type="GeneID" id="172053"/>
<dbReference type="KEGG" id="cel:CELE_Y119C1B.5"/>
<dbReference type="UCSC" id="Y119C1B.5">
    <property type="organism name" value="c. elegans"/>
</dbReference>
<dbReference type="AGR" id="WB:WBGene00022471"/>
<dbReference type="CTD" id="172053"/>
<dbReference type="WormBase" id="Y119C1B.5">
    <property type="protein sequence ID" value="CE46955"/>
    <property type="gene ID" value="WBGene00022471"/>
    <property type="gene designation" value="rnf-145"/>
</dbReference>
<dbReference type="eggNOG" id="KOG0802">
    <property type="taxonomic scope" value="Eukaryota"/>
</dbReference>
<dbReference type="GeneTree" id="ENSGT00940000169216"/>
<dbReference type="HOGENOM" id="CLU_016467_2_0_1"/>
<dbReference type="InParanoid" id="Q95Y82"/>
<dbReference type="OMA" id="SPWKHFR"/>
<dbReference type="OrthoDB" id="4348522at2759"/>
<dbReference type="PhylomeDB" id="Q95Y82"/>
<dbReference type="PRO" id="PR:Q95Y82"/>
<dbReference type="Proteomes" id="UP000001940">
    <property type="component" value="Chromosome I"/>
</dbReference>
<dbReference type="Bgee" id="WBGene00022471">
    <property type="expression patterns" value="Expressed in germ line (C elegans) and 4 other cell types or tissues"/>
</dbReference>
<dbReference type="GO" id="GO:0005801">
    <property type="term" value="C:cis-Golgi network"/>
    <property type="evidence" value="ECO:0000314"/>
    <property type="project" value="UniProtKB"/>
</dbReference>
<dbReference type="GO" id="GO:0012505">
    <property type="term" value="C:endomembrane system"/>
    <property type="evidence" value="ECO:0000318"/>
    <property type="project" value="GO_Central"/>
</dbReference>
<dbReference type="GO" id="GO:0016020">
    <property type="term" value="C:membrane"/>
    <property type="evidence" value="ECO:0007669"/>
    <property type="project" value="UniProtKB-SubCell"/>
</dbReference>
<dbReference type="GO" id="GO:0005802">
    <property type="term" value="C:trans-Golgi network"/>
    <property type="evidence" value="ECO:0000314"/>
    <property type="project" value="UniProtKB"/>
</dbReference>
<dbReference type="GO" id="GO:0061630">
    <property type="term" value="F:ubiquitin protein ligase activity"/>
    <property type="evidence" value="ECO:0000318"/>
    <property type="project" value="GO_Central"/>
</dbReference>
<dbReference type="GO" id="GO:0008270">
    <property type="term" value="F:zinc ion binding"/>
    <property type="evidence" value="ECO:0007669"/>
    <property type="project" value="UniProtKB-KW"/>
</dbReference>
<dbReference type="GO" id="GO:0036503">
    <property type="term" value="P:ERAD pathway"/>
    <property type="evidence" value="ECO:0000318"/>
    <property type="project" value="GO_Central"/>
</dbReference>
<dbReference type="GO" id="GO:0043161">
    <property type="term" value="P:proteasome-mediated ubiquitin-dependent protein catabolic process"/>
    <property type="evidence" value="ECO:0000318"/>
    <property type="project" value="GO_Central"/>
</dbReference>
<dbReference type="CDD" id="cd16476">
    <property type="entry name" value="RING-H2_RNF139-like"/>
    <property type="match status" value="1"/>
</dbReference>
<dbReference type="FunFam" id="3.30.40.10:FF:000756">
    <property type="entry name" value="RiNg Finger protein"/>
    <property type="match status" value="1"/>
</dbReference>
<dbReference type="Gene3D" id="3.30.40.10">
    <property type="entry name" value="Zinc/RING finger domain, C3HC4 (zinc finger)"/>
    <property type="match status" value="1"/>
</dbReference>
<dbReference type="InterPro" id="IPR050731">
    <property type="entry name" value="HRD1_E3_ubiq-ligases"/>
</dbReference>
<dbReference type="InterPro" id="IPR025754">
    <property type="entry name" value="TRC8_N_dom"/>
</dbReference>
<dbReference type="InterPro" id="IPR001841">
    <property type="entry name" value="Znf_RING"/>
</dbReference>
<dbReference type="InterPro" id="IPR011016">
    <property type="entry name" value="Znf_RING-CH"/>
</dbReference>
<dbReference type="InterPro" id="IPR013083">
    <property type="entry name" value="Znf_RING/FYVE/PHD"/>
</dbReference>
<dbReference type="PANTHER" id="PTHR22763:SF191">
    <property type="entry name" value="RING FINGER PROTEIN 145 HOMOLOG"/>
    <property type="match status" value="1"/>
</dbReference>
<dbReference type="PANTHER" id="PTHR22763">
    <property type="entry name" value="RING ZINC FINGER PROTEIN"/>
    <property type="match status" value="1"/>
</dbReference>
<dbReference type="Pfam" id="PF13705">
    <property type="entry name" value="TRC8_N"/>
    <property type="match status" value="1"/>
</dbReference>
<dbReference type="Pfam" id="PF13639">
    <property type="entry name" value="zf-RING_2"/>
    <property type="match status" value="1"/>
</dbReference>
<dbReference type="SMART" id="SM00184">
    <property type="entry name" value="RING"/>
    <property type="match status" value="1"/>
</dbReference>
<dbReference type="SMART" id="SM00744">
    <property type="entry name" value="RINGv"/>
    <property type="match status" value="1"/>
</dbReference>
<dbReference type="SUPFAM" id="SSF57850">
    <property type="entry name" value="RING/U-box"/>
    <property type="match status" value="1"/>
</dbReference>
<dbReference type="PROSITE" id="PS50089">
    <property type="entry name" value="ZF_RING_2"/>
    <property type="match status" value="1"/>
</dbReference>
<evidence type="ECO:0000250" key="1">
    <source>
        <dbReference type="UniProtKB" id="Q5SWK7"/>
    </source>
</evidence>
<evidence type="ECO:0000255" key="2"/>
<evidence type="ECO:0000255" key="3">
    <source>
        <dbReference type="PROSITE-ProRule" id="PRU00175"/>
    </source>
</evidence>
<evidence type="ECO:0000256" key="4">
    <source>
        <dbReference type="SAM" id="MobiDB-lite"/>
    </source>
</evidence>
<evidence type="ECO:0000269" key="5">
    <source>
    </source>
</evidence>
<evidence type="ECO:0000303" key="6">
    <source>
    </source>
</evidence>
<evidence type="ECO:0000305" key="7"/>
<evidence type="ECO:0000312" key="8">
    <source>
        <dbReference type="Proteomes" id="UP000001940"/>
    </source>
</evidence>
<evidence type="ECO:0000312" key="9">
    <source>
        <dbReference type="WormBase" id="Y119C1B.5"/>
    </source>
</evidence>
<proteinExistence type="inferred from homology"/>
<reference evidence="8" key="1">
    <citation type="journal article" date="1998" name="Science">
        <title>Genome sequence of the nematode C. elegans: a platform for investigating biology.</title>
        <authorList>
            <consortium name="The C. elegans sequencing consortium"/>
        </authorList>
    </citation>
    <scope>NUCLEOTIDE SEQUENCE [LARGE SCALE GENOMIC DNA]</scope>
    <source>
        <strain evidence="8">Bristol N2</strain>
    </source>
</reference>
<reference evidence="7" key="2">
    <citation type="journal article" date="2020" name="PLoS Biol.">
        <title>Regulation of glial size by eicosapentaenoic acid through a novel Golgi apparatus mechanism.</title>
        <authorList>
            <person name="Zhang A."/>
            <person name="Guan Z."/>
            <person name="Ockerman K."/>
            <person name="Dong P."/>
            <person name="Guo J."/>
            <person name="Wang Z."/>
            <person name="Yan D."/>
        </authorList>
    </citation>
    <scope>FUNCTION</scope>
    <scope>SUBCELLULAR LOCATION</scope>
</reference>